<proteinExistence type="evidence at transcript level"/>
<keyword id="KW-0012">Acyltransferase</keyword>
<keyword id="KW-1003">Cell membrane</keyword>
<keyword id="KW-0256">Endoplasmic reticulum</keyword>
<keyword id="KW-0325">Glycoprotein</keyword>
<keyword id="KW-0472">Membrane</keyword>
<keyword id="KW-1185">Reference proteome</keyword>
<keyword id="KW-0808">Transferase</keyword>
<keyword id="KW-0812">Transmembrane</keyword>
<keyword id="KW-1133">Transmembrane helix</keyword>
<organism>
    <name type="scientific">Arabidopsis thaliana</name>
    <name type="common">Mouse-ear cress</name>
    <dbReference type="NCBI Taxonomy" id="3702"/>
    <lineage>
        <taxon>Eukaryota</taxon>
        <taxon>Viridiplantae</taxon>
        <taxon>Streptophyta</taxon>
        <taxon>Embryophyta</taxon>
        <taxon>Tracheophyta</taxon>
        <taxon>Spermatophyta</taxon>
        <taxon>Magnoliopsida</taxon>
        <taxon>eudicotyledons</taxon>
        <taxon>Gunneridae</taxon>
        <taxon>Pentapetalae</taxon>
        <taxon>rosids</taxon>
        <taxon>malvids</taxon>
        <taxon>Brassicales</taxon>
        <taxon>Brassicaceae</taxon>
        <taxon>Camelineae</taxon>
        <taxon>Arabidopsis</taxon>
    </lineage>
</organism>
<accession>Q9M3B2</accession>
<accession>Q1G2Z5</accession>
<feature type="chain" id="PRO_0000452615" description="Wax ester synthase/diacylglycerol acyltransferase 5">
    <location>
        <begin position="1"/>
        <end position="507"/>
    </location>
</feature>
<feature type="topological domain" description="Cytoplasmic" evidence="7">
    <location>
        <begin position="1"/>
        <end position="211"/>
    </location>
</feature>
<feature type="transmembrane region" description="Helical" evidence="3">
    <location>
        <begin position="212"/>
        <end position="232"/>
    </location>
</feature>
<feature type="topological domain" description="Lumenal" evidence="7">
    <location>
        <begin position="233"/>
        <end position="507"/>
    </location>
</feature>
<feature type="active site" description="Proton acceptor" evidence="3">
    <location>
        <position position="161"/>
    </location>
</feature>
<feature type="glycosylation site" description="N-linked (GlcNAc...) asparagine" evidence="4">
    <location>
        <position position="314"/>
    </location>
</feature>
<feature type="glycosylation site" description="N-linked (GlcNAc...) asparagine" evidence="4">
    <location>
        <position position="421"/>
    </location>
</feature>
<feature type="sequence conflict" description="In Ref. 3; ABF59162." evidence="7" ref="3">
    <original>Q</original>
    <variation>E</variation>
    <location>
        <position position="109"/>
    </location>
</feature>
<name>WSD5_ARATH</name>
<dbReference type="EC" id="2.3.1.20" evidence="2"/>
<dbReference type="EC" id="2.3.1.75" evidence="2"/>
<dbReference type="EMBL" id="AL132956">
    <property type="protein sequence ID" value="CAB66399.1"/>
    <property type="molecule type" value="Genomic_DNA"/>
</dbReference>
<dbReference type="EMBL" id="CP002686">
    <property type="protein sequence ID" value="AEE78510.1"/>
    <property type="molecule type" value="Genomic_DNA"/>
</dbReference>
<dbReference type="EMBL" id="DQ492233">
    <property type="protein sequence ID" value="ABF59162.1"/>
    <property type="molecule type" value="mRNA"/>
</dbReference>
<dbReference type="PIR" id="T45825">
    <property type="entry name" value="T45825"/>
</dbReference>
<dbReference type="RefSeq" id="NP_190489.1">
    <property type="nucleotide sequence ID" value="NM_114779.2"/>
</dbReference>
<dbReference type="SMR" id="Q9M3B2"/>
<dbReference type="STRING" id="3702.Q9M3B2"/>
<dbReference type="GlyCosmos" id="Q9M3B2">
    <property type="glycosylation" value="2 sites, No reported glycans"/>
</dbReference>
<dbReference type="GlyGen" id="Q9M3B2">
    <property type="glycosylation" value="2 sites"/>
</dbReference>
<dbReference type="PaxDb" id="3702-AT3G49200.1"/>
<dbReference type="ProteomicsDB" id="252336"/>
<dbReference type="EnsemblPlants" id="AT3G49200.1">
    <property type="protein sequence ID" value="AT3G49200.1"/>
    <property type="gene ID" value="AT3G49200"/>
</dbReference>
<dbReference type="GeneID" id="824081"/>
<dbReference type="Gramene" id="AT3G49200.1">
    <property type="protein sequence ID" value="AT3G49200.1"/>
    <property type="gene ID" value="AT3G49200"/>
</dbReference>
<dbReference type="KEGG" id="ath:AT3G49200"/>
<dbReference type="Araport" id="AT3G49200"/>
<dbReference type="TAIR" id="AT3G49200"/>
<dbReference type="eggNOG" id="ENOG502QTZ2">
    <property type="taxonomic scope" value="Eukaryota"/>
</dbReference>
<dbReference type="HOGENOM" id="CLU_027831_0_0_1"/>
<dbReference type="InParanoid" id="Q9M3B2"/>
<dbReference type="OMA" id="FNCYIIS"/>
<dbReference type="PhylomeDB" id="Q9M3B2"/>
<dbReference type="UniPathway" id="UPA00282"/>
<dbReference type="PRO" id="PR:Q9M3B2"/>
<dbReference type="Proteomes" id="UP000006548">
    <property type="component" value="Chromosome 3"/>
</dbReference>
<dbReference type="ExpressionAtlas" id="Q9M3B2">
    <property type="expression patterns" value="baseline and differential"/>
</dbReference>
<dbReference type="GO" id="GO:0005789">
    <property type="term" value="C:endoplasmic reticulum membrane"/>
    <property type="evidence" value="ECO:0007669"/>
    <property type="project" value="UniProtKB-SubCell"/>
</dbReference>
<dbReference type="GO" id="GO:0005886">
    <property type="term" value="C:plasma membrane"/>
    <property type="evidence" value="ECO:0007669"/>
    <property type="project" value="UniProtKB-SubCell"/>
</dbReference>
<dbReference type="GO" id="GO:0004144">
    <property type="term" value="F:diacylglycerol O-acyltransferase activity"/>
    <property type="evidence" value="ECO:0007669"/>
    <property type="project" value="UniProtKB-EC"/>
</dbReference>
<dbReference type="GO" id="GO:0047196">
    <property type="term" value="F:long-chain-alcohol O-fatty-acyltransferase activity"/>
    <property type="evidence" value="ECO:0007669"/>
    <property type="project" value="UniProtKB-EC"/>
</dbReference>
<dbReference type="GO" id="GO:0019432">
    <property type="term" value="P:triglyceride biosynthetic process"/>
    <property type="evidence" value="ECO:0007669"/>
    <property type="project" value="UniProtKB-UniPathway"/>
</dbReference>
<dbReference type="FunFam" id="3.30.559.10:FF:000033">
    <property type="entry name" value="O-acyltransferase (WSD1-like) family protein"/>
    <property type="match status" value="1"/>
</dbReference>
<dbReference type="Gene3D" id="3.30.559.10">
    <property type="entry name" value="Chloramphenicol acetyltransferase-like domain"/>
    <property type="match status" value="1"/>
</dbReference>
<dbReference type="InterPro" id="IPR023213">
    <property type="entry name" value="CAT-like_dom_sf"/>
</dbReference>
<dbReference type="InterPro" id="IPR045034">
    <property type="entry name" value="O-acyltransferase_WSD1-like"/>
</dbReference>
<dbReference type="InterPro" id="IPR009721">
    <property type="entry name" value="O-acyltransferase_WSD1_C"/>
</dbReference>
<dbReference type="InterPro" id="IPR004255">
    <property type="entry name" value="O-acyltransferase_WSD1_N"/>
</dbReference>
<dbReference type="PANTHER" id="PTHR31650">
    <property type="entry name" value="O-ACYLTRANSFERASE (WSD1-LIKE) FAMILY PROTEIN"/>
    <property type="match status" value="1"/>
</dbReference>
<dbReference type="PANTHER" id="PTHR31650:SF1">
    <property type="entry name" value="WAX ESTER SYNTHASE_DIACYLGLYCEROL ACYLTRANSFERASE 4-RELATED"/>
    <property type="match status" value="1"/>
</dbReference>
<dbReference type="Pfam" id="PF06974">
    <property type="entry name" value="WS_DGAT_C"/>
    <property type="match status" value="1"/>
</dbReference>
<dbReference type="Pfam" id="PF03007">
    <property type="entry name" value="WS_DGAT_cat"/>
    <property type="match status" value="1"/>
</dbReference>
<dbReference type="SUPFAM" id="SSF52777">
    <property type="entry name" value="CoA-dependent acyltransferases"/>
    <property type="match status" value="1"/>
</dbReference>
<sequence>MEIKIRRRRGQIAETTVKKEVEEEEQPLSPAARLFHAPEFNCYIISVVGLKNKIEPDMIIEGIKQTLMRHPRFSSKLVNNCNNNRQEQKWVRTNVVVEDHVIIPKIQTQHIENANADVFLESYVSDLTTIPLDTSKPLWEVHLLDLKTSDAENVAVLRIHHSLGDGMSMMSLVLACTRKTSNPNELPSLPYQNRPSSGSSSLKTSSRCYSRFFWLVMVLWSAALLVLNTVCDALEFIATALFLKDTETPIKGDFKLSKGKRMCMVHRTVSLDDIKLIKNAMKMTVNDVVLGVSQAGLSQYLKRRYGEQEESKRNSSNIPKGIRLRAALLVNLRPTTGIQDLADMMTKGSKCRWGNWIGYIIFPFSIALCDDPLKHLRRAKSTIDRKKNSLEAVLTFVVGKILLNTLGVQRAANVLNRALSNTTMSFSNLVGPVEEISFYGHTVTYIAPSVYGHPHALTMHFQSYMNKLTISLTVDPTVISDPHKLCDDWEESLRSIKVVVQERTSTQ</sequence>
<reference key="1">
    <citation type="journal article" date="2000" name="Nature">
        <title>Sequence and analysis of chromosome 3 of the plant Arabidopsis thaliana.</title>
        <authorList>
            <person name="Salanoubat M."/>
            <person name="Lemcke K."/>
            <person name="Rieger M."/>
            <person name="Ansorge W."/>
            <person name="Unseld M."/>
            <person name="Fartmann B."/>
            <person name="Valle G."/>
            <person name="Bloecker H."/>
            <person name="Perez-Alonso M."/>
            <person name="Obermaier B."/>
            <person name="Delseny M."/>
            <person name="Boutry M."/>
            <person name="Grivell L.A."/>
            <person name="Mache R."/>
            <person name="Puigdomenech P."/>
            <person name="De Simone V."/>
            <person name="Choisne N."/>
            <person name="Artiguenave F."/>
            <person name="Robert C."/>
            <person name="Brottier P."/>
            <person name="Wincker P."/>
            <person name="Cattolico L."/>
            <person name="Weissenbach J."/>
            <person name="Saurin W."/>
            <person name="Quetier F."/>
            <person name="Schaefer M."/>
            <person name="Mueller-Auer S."/>
            <person name="Gabel C."/>
            <person name="Fuchs M."/>
            <person name="Benes V."/>
            <person name="Wurmbach E."/>
            <person name="Drzonek H."/>
            <person name="Erfle H."/>
            <person name="Jordan N."/>
            <person name="Bangert S."/>
            <person name="Wiedelmann R."/>
            <person name="Kranz H."/>
            <person name="Voss H."/>
            <person name="Holland R."/>
            <person name="Brandt P."/>
            <person name="Nyakatura G."/>
            <person name="Vezzi A."/>
            <person name="D'Angelo M."/>
            <person name="Pallavicini A."/>
            <person name="Toppo S."/>
            <person name="Simionati B."/>
            <person name="Conrad A."/>
            <person name="Hornischer K."/>
            <person name="Kauer G."/>
            <person name="Loehnert T.-H."/>
            <person name="Nordsiek G."/>
            <person name="Reichelt J."/>
            <person name="Scharfe M."/>
            <person name="Schoen O."/>
            <person name="Bargues M."/>
            <person name="Terol J."/>
            <person name="Climent J."/>
            <person name="Navarro P."/>
            <person name="Collado C."/>
            <person name="Perez-Perez A."/>
            <person name="Ottenwaelder B."/>
            <person name="Duchemin D."/>
            <person name="Cooke R."/>
            <person name="Laudie M."/>
            <person name="Berger-Llauro C."/>
            <person name="Purnelle B."/>
            <person name="Masuy D."/>
            <person name="de Haan M."/>
            <person name="Maarse A.C."/>
            <person name="Alcaraz J.-P."/>
            <person name="Cottet A."/>
            <person name="Casacuberta E."/>
            <person name="Monfort A."/>
            <person name="Argiriou A."/>
            <person name="Flores M."/>
            <person name="Liguori R."/>
            <person name="Vitale D."/>
            <person name="Mannhaupt G."/>
            <person name="Haase D."/>
            <person name="Schoof H."/>
            <person name="Rudd S."/>
            <person name="Zaccaria P."/>
            <person name="Mewes H.-W."/>
            <person name="Mayer K.F.X."/>
            <person name="Kaul S."/>
            <person name="Town C.D."/>
            <person name="Koo H.L."/>
            <person name="Tallon L.J."/>
            <person name="Jenkins J."/>
            <person name="Rooney T."/>
            <person name="Rizzo M."/>
            <person name="Walts A."/>
            <person name="Utterback T."/>
            <person name="Fujii C.Y."/>
            <person name="Shea T.P."/>
            <person name="Creasy T.H."/>
            <person name="Haas B."/>
            <person name="Maiti R."/>
            <person name="Wu D."/>
            <person name="Peterson J."/>
            <person name="Van Aken S."/>
            <person name="Pai G."/>
            <person name="Militscher J."/>
            <person name="Sellers P."/>
            <person name="Gill J.E."/>
            <person name="Feldblyum T.V."/>
            <person name="Preuss D."/>
            <person name="Lin X."/>
            <person name="Nierman W.C."/>
            <person name="Salzberg S.L."/>
            <person name="White O."/>
            <person name="Venter J.C."/>
            <person name="Fraser C.M."/>
            <person name="Kaneko T."/>
            <person name="Nakamura Y."/>
            <person name="Sato S."/>
            <person name="Kato T."/>
            <person name="Asamizu E."/>
            <person name="Sasamoto S."/>
            <person name="Kimura T."/>
            <person name="Idesawa K."/>
            <person name="Kawashima K."/>
            <person name="Kishida Y."/>
            <person name="Kiyokawa C."/>
            <person name="Kohara M."/>
            <person name="Matsumoto M."/>
            <person name="Matsuno A."/>
            <person name="Muraki A."/>
            <person name="Nakayama S."/>
            <person name="Nakazaki N."/>
            <person name="Shinpo S."/>
            <person name="Takeuchi C."/>
            <person name="Wada T."/>
            <person name="Watanabe A."/>
            <person name="Yamada M."/>
            <person name="Yasuda M."/>
            <person name="Tabata S."/>
        </authorList>
    </citation>
    <scope>NUCLEOTIDE SEQUENCE [LARGE SCALE GENOMIC DNA]</scope>
    <source>
        <strain>cv. Columbia</strain>
    </source>
</reference>
<reference key="2">
    <citation type="journal article" date="2017" name="Plant J.">
        <title>Araport11: a complete reannotation of the Arabidopsis thaliana reference genome.</title>
        <authorList>
            <person name="Cheng C.Y."/>
            <person name="Krishnakumar V."/>
            <person name="Chan A.P."/>
            <person name="Thibaud-Nissen F."/>
            <person name="Schobel S."/>
            <person name="Town C.D."/>
        </authorList>
    </citation>
    <scope>GENOME REANNOTATION</scope>
    <source>
        <strain>cv. Columbia</strain>
    </source>
</reference>
<reference key="3">
    <citation type="journal article" date="2006" name="Plant Biotechnol. J.">
        <title>Simultaneous high-throughput recombinational cloning of open reading frames in closed and open configurations.</title>
        <authorList>
            <person name="Underwood B.A."/>
            <person name="Vanderhaeghen R."/>
            <person name="Whitford R."/>
            <person name="Town C.D."/>
            <person name="Hilson P."/>
        </authorList>
    </citation>
    <scope>NUCLEOTIDE SEQUENCE [LARGE SCALE MRNA]</scope>
    <source>
        <strain>cv. Columbia</strain>
    </source>
</reference>
<reference key="4">
    <citation type="journal article" date="2003" name="J. Biol. Chem.">
        <title>A novel bifunctional wax ester synthase/acyl-CoA:diacylglycerol acyltransferase mediates wax ester and triacylglycerol biosynthesis in Acinetobacter calcoaceticus ADP1.</title>
        <authorList>
            <person name="Kalscheuer R."/>
            <person name="Steinbuchel A."/>
        </authorList>
    </citation>
    <scope>GENE FAMILY</scope>
</reference>
<reference key="5">
    <citation type="journal article" date="2008" name="Plant Physiol.">
        <title>Identification of the wax ester synthase/acyl-coenzyme A: diacylglycerol acyltransferase WSD1 required for stem wax ester biosynthesis in Arabidopsis.</title>
        <authorList>
            <person name="Li F."/>
            <person name="Wu X."/>
            <person name="Lam P."/>
            <person name="Bird D."/>
            <person name="Zheng H."/>
            <person name="Samuels A.L."/>
            <person name="Jetter R."/>
            <person name="Kunst L."/>
        </authorList>
    </citation>
    <scope>GENE FAMILY</scope>
    <scope>NOMENCLATURE</scope>
</reference>
<reference key="6">
    <citation type="journal article" date="2013" name="Arabidopsis Book">
        <title>Acyl-lipid metabolism.</title>
        <authorList>
            <person name="Li-Beisson Y."/>
            <person name="Shorrosh B."/>
            <person name="Beisson F."/>
            <person name="Andersson M.X."/>
            <person name="Arondel V."/>
            <person name="Bates P.D."/>
            <person name="Baud S."/>
            <person name="Bird D."/>
            <person name="Debono A."/>
            <person name="Durrett T.P."/>
            <person name="Franke R.B."/>
            <person name="Graham I.A."/>
            <person name="Katayama K."/>
            <person name="Kelly A.A."/>
            <person name="Larson T."/>
            <person name="Markham J.E."/>
            <person name="Miquel M."/>
            <person name="Molina I."/>
            <person name="Nishida I."/>
            <person name="Rowland O."/>
            <person name="Samuels L."/>
            <person name="Schmid K.M."/>
            <person name="Wada H."/>
            <person name="Welti R."/>
            <person name="Xu C."/>
            <person name="Zallot R."/>
            <person name="Ohlrogge J."/>
        </authorList>
    </citation>
    <scope>REVIEW ON ACYL-LIPID METABOLISM</scope>
</reference>
<reference key="7">
    <citation type="journal article" date="2019" name="Plant J.">
        <title>Surface wax esters contribute to drought tolerance in Arabidopsis.</title>
        <authorList>
            <person name="Patwari P."/>
            <person name="Salewski V."/>
            <person name="Gutbrod K."/>
            <person name="Kreszies T."/>
            <person name="Dresen-Scholz B."/>
            <person name="Peisker H."/>
            <person name="Steiner U."/>
            <person name="Meyer A.J."/>
            <person name="Schreiber L."/>
            <person name="Doermann P."/>
        </authorList>
    </citation>
    <scope>TISSUE SPECIFICITY</scope>
    <source>
        <strain>cv. Columbia</strain>
    </source>
</reference>
<comment type="function">
    <text evidence="2">Bifunctional wax ester synthase/diacylglycerol acyltransferase (By similarity). Involved in cuticular wax biosynthesis (By similarity).</text>
</comment>
<comment type="catalytic activity">
    <reaction evidence="2">
        <text>a long chain fatty alcohol + a fatty acyl-CoA = a wax ester + CoA</text>
        <dbReference type="Rhea" id="RHEA:38443"/>
        <dbReference type="ChEBI" id="CHEBI:10036"/>
        <dbReference type="ChEBI" id="CHEBI:17135"/>
        <dbReference type="ChEBI" id="CHEBI:57287"/>
        <dbReference type="ChEBI" id="CHEBI:77636"/>
        <dbReference type="EC" id="2.3.1.75"/>
    </reaction>
</comment>
<comment type="catalytic activity">
    <reaction evidence="2">
        <text>an acyl-CoA + a 1,2-diacyl-sn-glycerol = a triacyl-sn-glycerol + CoA</text>
        <dbReference type="Rhea" id="RHEA:10868"/>
        <dbReference type="ChEBI" id="CHEBI:17815"/>
        <dbReference type="ChEBI" id="CHEBI:57287"/>
        <dbReference type="ChEBI" id="CHEBI:58342"/>
        <dbReference type="ChEBI" id="CHEBI:64615"/>
        <dbReference type="EC" id="2.3.1.20"/>
    </reaction>
</comment>
<comment type="pathway">
    <text evidence="2">Glycerolipid metabolism; triacylglycerol biosynthesis.</text>
</comment>
<comment type="pathway">
    <text evidence="2">Lipid metabolism.</text>
</comment>
<comment type="subcellular location">
    <subcellularLocation>
        <location evidence="1">Cell membrane</location>
        <topology evidence="3">Single-pass membrane protein</topology>
    </subcellularLocation>
    <subcellularLocation>
        <location evidence="2">Endoplasmic reticulum membrane</location>
        <topology evidence="3">Single-pass membrane protein</topology>
    </subcellularLocation>
</comment>
<comment type="tissue specificity">
    <text evidence="5">Mostly expressed in flowers and siliques.</text>
</comment>
<comment type="similarity">
    <text evidence="7">In the N-terminal section; belongs to the long-chain O-acyltransferase family.</text>
</comment>
<protein>
    <recommendedName>
        <fullName evidence="6">Wax ester synthase/diacylglycerol acyltransferase 5</fullName>
        <shortName evidence="6">WS/DGAT 5</shortName>
    </recommendedName>
    <alternativeName>
        <fullName evidence="6">Diacylglycerol O-acyltransferase WSD5</fullName>
        <ecNumber evidence="2">2.3.1.20</ecNumber>
    </alternativeName>
    <alternativeName>
        <fullName evidence="6">Long-chain-alcohol O-fatty-acyltransferase WSD5</fullName>
        <ecNumber evidence="2">2.3.1.75</ecNumber>
    </alternativeName>
</protein>
<gene>
    <name evidence="6" type="primary">WSD5</name>
    <name evidence="8" type="ordered locus">At3g49200</name>
    <name evidence="9" type="ORF">F2K15.60</name>
</gene>
<evidence type="ECO:0000250" key="1">
    <source>
        <dbReference type="UniProtKB" id="Q5KS41"/>
    </source>
</evidence>
<evidence type="ECO:0000250" key="2">
    <source>
        <dbReference type="UniProtKB" id="Q93ZR6"/>
    </source>
</evidence>
<evidence type="ECO:0000255" key="3"/>
<evidence type="ECO:0000255" key="4">
    <source>
        <dbReference type="PROSITE-ProRule" id="PRU00498"/>
    </source>
</evidence>
<evidence type="ECO:0000269" key="5">
    <source>
    </source>
</evidence>
<evidence type="ECO:0000303" key="6">
    <source>
    </source>
</evidence>
<evidence type="ECO:0000305" key="7"/>
<evidence type="ECO:0000312" key="8">
    <source>
        <dbReference type="Araport" id="AT3G49200"/>
    </source>
</evidence>
<evidence type="ECO:0000312" key="9">
    <source>
        <dbReference type="EMBL" id="CAB66399.1"/>
    </source>
</evidence>